<keyword id="KW-0963">Cytoplasm</keyword>
<keyword id="KW-0324">Glycolysis</keyword>
<keyword id="KW-0520">NAD</keyword>
<keyword id="KW-0560">Oxidoreductase</keyword>
<keyword id="KW-1185">Reference proteome</keyword>
<proteinExistence type="inferred from homology"/>
<feature type="chain" id="PRO_0000145513" description="Glyceraldehyde-3-phosphate dehydrogenase 4">
    <location>
        <begin position="1"/>
        <end position="341"/>
    </location>
</feature>
<feature type="active site" description="Nucleophile" evidence="2">
    <location>
        <position position="158"/>
    </location>
</feature>
<feature type="binding site" evidence="1">
    <location>
        <begin position="13"/>
        <end position="14"/>
    </location>
    <ligand>
        <name>NAD(+)</name>
        <dbReference type="ChEBI" id="CHEBI:57540"/>
    </ligand>
</feature>
<feature type="binding site" evidence="1">
    <location>
        <position position="35"/>
    </location>
    <ligand>
        <name>NAD(+)</name>
        <dbReference type="ChEBI" id="CHEBI:57540"/>
    </ligand>
</feature>
<feature type="binding site" evidence="1">
    <location>
        <position position="85"/>
    </location>
    <ligand>
        <name>NAD(+)</name>
        <dbReference type="ChEBI" id="CHEBI:57540"/>
    </ligand>
</feature>
<feature type="binding site" evidence="1">
    <location>
        <begin position="157"/>
        <end position="159"/>
    </location>
    <ligand>
        <name>D-glyceraldehyde 3-phosphate</name>
        <dbReference type="ChEBI" id="CHEBI:59776"/>
    </ligand>
</feature>
<feature type="binding site" evidence="1">
    <location>
        <position position="188"/>
    </location>
    <ligand>
        <name>D-glyceraldehyde 3-phosphate</name>
        <dbReference type="ChEBI" id="CHEBI:59776"/>
    </ligand>
</feature>
<feature type="binding site" evidence="1">
    <location>
        <begin position="217"/>
        <end position="218"/>
    </location>
    <ligand>
        <name>D-glyceraldehyde 3-phosphate</name>
        <dbReference type="ChEBI" id="CHEBI:59776"/>
    </ligand>
</feature>
<feature type="binding site" evidence="1">
    <location>
        <position position="240"/>
    </location>
    <ligand>
        <name>D-glyceraldehyde 3-phosphate</name>
        <dbReference type="ChEBI" id="CHEBI:59776"/>
    </ligand>
</feature>
<feature type="binding site" evidence="1">
    <location>
        <position position="322"/>
    </location>
    <ligand>
        <name>NAD(+)</name>
        <dbReference type="ChEBI" id="CHEBI:57540"/>
    </ligand>
</feature>
<feature type="site" description="Activates thiol group during catalysis" evidence="1">
    <location>
        <position position="185"/>
    </location>
</feature>
<name>G3P4_CAEEL</name>
<evidence type="ECO:0000250" key="1"/>
<evidence type="ECO:0000255" key="2">
    <source>
        <dbReference type="PROSITE-ProRule" id="PRU10009"/>
    </source>
</evidence>
<evidence type="ECO:0000305" key="3"/>
<gene>
    <name type="primary">gpd-4</name>
    <name type="ORF">F33H1.2</name>
</gene>
<dbReference type="EC" id="1.2.1.12"/>
<dbReference type="EMBL" id="X52673">
    <property type="protein sequence ID" value="CAA36899.1"/>
    <property type="molecule type" value="Genomic_DNA"/>
</dbReference>
<dbReference type="EMBL" id="Z48783">
    <property type="protein sequence ID" value="CAA88697.1"/>
    <property type="molecule type" value="Genomic_DNA"/>
</dbReference>
<dbReference type="PIR" id="S03912">
    <property type="entry name" value="DEKWG4"/>
</dbReference>
<dbReference type="RefSeq" id="NP_496192.1">
    <property type="nucleotide sequence ID" value="NM_063791.8"/>
</dbReference>
<dbReference type="SMR" id="P17331"/>
<dbReference type="BioGRID" id="39897">
    <property type="interactions" value="12"/>
</dbReference>
<dbReference type="DIP" id="DIP-25637N"/>
<dbReference type="FunCoup" id="P17331">
    <property type="interactions" value="542"/>
</dbReference>
<dbReference type="IntAct" id="P17331">
    <property type="interactions" value="1"/>
</dbReference>
<dbReference type="STRING" id="6239.F33H1.2.2"/>
<dbReference type="iPTMnet" id="P17331"/>
<dbReference type="PaxDb" id="6239-F33H1.2"/>
<dbReference type="PeptideAtlas" id="P17331"/>
<dbReference type="EnsemblMetazoa" id="F33H1.2.1">
    <property type="protein sequence ID" value="F33H1.2.1"/>
    <property type="gene ID" value="WBGene00001686"/>
</dbReference>
<dbReference type="GeneID" id="174578"/>
<dbReference type="KEGG" id="cel:CELE_F33H1.2"/>
<dbReference type="UCSC" id="F33H1.2.2">
    <property type="organism name" value="c. elegans"/>
</dbReference>
<dbReference type="AGR" id="WB:WBGene00001686"/>
<dbReference type="CTD" id="174578"/>
<dbReference type="WormBase" id="F33H1.2">
    <property type="protein sequence ID" value="CE01568"/>
    <property type="gene ID" value="WBGene00001686"/>
    <property type="gene designation" value="gpd-4"/>
</dbReference>
<dbReference type="eggNOG" id="KOG0657">
    <property type="taxonomic scope" value="Eukaryota"/>
</dbReference>
<dbReference type="GeneTree" id="ENSGT00940000153298"/>
<dbReference type="HOGENOM" id="CLU_030140_0_1_1"/>
<dbReference type="InParanoid" id="P17331"/>
<dbReference type="OMA" id="NMHITVF"/>
<dbReference type="OrthoDB" id="1152826at2759"/>
<dbReference type="PhylomeDB" id="P17331"/>
<dbReference type="Reactome" id="R-CEL-70171">
    <property type="pathway name" value="Glycolysis"/>
</dbReference>
<dbReference type="Reactome" id="R-CEL-70263">
    <property type="pathway name" value="Gluconeogenesis"/>
</dbReference>
<dbReference type="UniPathway" id="UPA00109">
    <property type="reaction ID" value="UER00184"/>
</dbReference>
<dbReference type="PRO" id="PR:P17331"/>
<dbReference type="Proteomes" id="UP000001940">
    <property type="component" value="Chromosome II"/>
</dbReference>
<dbReference type="GO" id="GO:0005829">
    <property type="term" value="C:cytosol"/>
    <property type="evidence" value="ECO:0000318"/>
    <property type="project" value="GO_Central"/>
</dbReference>
<dbReference type="GO" id="GO:0004365">
    <property type="term" value="F:glyceraldehyde-3-phosphate dehydrogenase (NAD+) (phosphorylating) activity"/>
    <property type="evidence" value="ECO:0000318"/>
    <property type="project" value="GO_Central"/>
</dbReference>
<dbReference type="GO" id="GO:0051287">
    <property type="term" value="F:NAD binding"/>
    <property type="evidence" value="ECO:0007669"/>
    <property type="project" value="InterPro"/>
</dbReference>
<dbReference type="GO" id="GO:0050661">
    <property type="term" value="F:NADP binding"/>
    <property type="evidence" value="ECO:0007669"/>
    <property type="project" value="InterPro"/>
</dbReference>
<dbReference type="GO" id="GO:0006006">
    <property type="term" value="P:glucose metabolic process"/>
    <property type="evidence" value="ECO:0007669"/>
    <property type="project" value="InterPro"/>
</dbReference>
<dbReference type="GO" id="GO:0006096">
    <property type="term" value="P:glycolytic process"/>
    <property type="evidence" value="ECO:0000318"/>
    <property type="project" value="GO_Central"/>
</dbReference>
<dbReference type="CDD" id="cd18126">
    <property type="entry name" value="GAPDH_I_C"/>
    <property type="match status" value="1"/>
</dbReference>
<dbReference type="CDD" id="cd05214">
    <property type="entry name" value="GAPDH_I_N"/>
    <property type="match status" value="1"/>
</dbReference>
<dbReference type="FunFam" id="3.30.360.10:FF:000001">
    <property type="entry name" value="Glyceraldehyde-3-phosphate dehydrogenase"/>
    <property type="match status" value="1"/>
</dbReference>
<dbReference type="FunFam" id="3.40.50.720:FF:000266">
    <property type="entry name" value="Glyceraldehyde-3-phosphate dehydrogenase"/>
    <property type="match status" value="1"/>
</dbReference>
<dbReference type="Gene3D" id="3.30.360.10">
    <property type="entry name" value="Dihydrodipicolinate Reductase, domain 2"/>
    <property type="match status" value="1"/>
</dbReference>
<dbReference type="Gene3D" id="3.40.50.720">
    <property type="entry name" value="NAD(P)-binding Rossmann-like Domain"/>
    <property type="match status" value="1"/>
</dbReference>
<dbReference type="InterPro" id="IPR020831">
    <property type="entry name" value="GlycerAld/Erythrose_P_DH"/>
</dbReference>
<dbReference type="InterPro" id="IPR020830">
    <property type="entry name" value="GlycerAld_3-P_DH_AS"/>
</dbReference>
<dbReference type="InterPro" id="IPR020829">
    <property type="entry name" value="GlycerAld_3-P_DH_cat"/>
</dbReference>
<dbReference type="InterPro" id="IPR020828">
    <property type="entry name" value="GlycerAld_3-P_DH_NAD(P)-bd"/>
</dbReference>
<dbReference type="InterPro" id="IPR006424">
    <property type="entry name" value="Glyceraldehyde-3-P_DH_1"/>
</dbReference>
<dbReference type="InterPro" id="IPR036291">
    <property type="entry name" value="NAD(P)-bd_dom_sf"/>
</dbReference>
<dbReference type="NCBIfam" id="TIGR01534">
    <property type="entry name" value="GAPDH-I"/>
    <property type="match status" value="1"/>
</dbReference>
<dbReference type="PANTHER" id="PTHR10836">
    <property type="entry name" value="GLYCERALDEHYDE 3-PHOSPHATE DEHYDROGENASE"/>
    <property type="match status" value="1"/>
</dbReference>
<dbReference type="PANTHER" id="PTHR10836:SF65">
    <property type="entry name" value="GLYCERALDEHYDE-3-PHOSPHATE DEHYDROGENASE 1-RELATED"/>
    <property type="match status" value="1"/>
</dbReference>
<dbReference type="Pfam" id="PF02800">
    <property type="entry name" value="Gp_dh_C"/>
    <property type="match status" value="1"/>
</dbReference>
<dbReference type="Pfam" id="PF00044">
    <property type="entry name" value="Gp_dh_N"/>
    <property type="match status" value="1"/>
</dbReference>
<dbReference type="PIRSF" id="PIRSF000149">
    <property type="entry name" value="GAP_DH"/>
    <property type="match status" value="1"/>
</dbReference>
<dbReference type="PRINTS" id="PR00078">
    <property type="entry name" value="G3PDHDRGNASE"/>
</dbReference>
<dbReference type="SMART" id="SM00846">
    <property type="entry name" value="Gp_dh_N"/>
    <property type="match status" value="1"/>
</dbReference>
<dbReference type="SUPFAM" id="SSF55347">
    <property type="entry name" value="Glyceraldehyde-3-phosphate dehydrogenase-like, C-terminal domain"/>
    <property type="match status" value="1"/>
</dbReference>
<dbReference type="SUPFAM" id="SSF51735">
    <property type="entry name" value="NAD(P)-binding Rossmann-fold domains"/>
    <property type="match status" value="1"/>
</dbReference>
<dbReference type="PROSITE" id="PS00071">
    <property type="entry name" value="GAPDH"/>
    <property type="match status" value="1"/>
</dbReference>
<sequence length="341" mass="36427">MSKANVGINGFGRIGRLVLRAAVEKDTVQVVAVNDPFITIDYMVYLFKYDSTHGQFKGTVTYDGDFLIVQKDGKSSHKIKVFNSKDPAAIAWGSVKADFVVESTGVFTTKEKASAHLQGGAKKVIISAPSADAPMYVVGVNHEKYDASNDHVISNASCTTNCLAPLAKVINDNFGIIEGLMTTVHAVTATQKTVDGPSGKLWRDGRGAGQNIIPASTGAAKAVGKVIPELNGKLTGMAFRVPTPDVSVVDLTVRLEKPASMDDIKKVVKAAADGPMKGILAYTEDQVVSTDFVSDPHSSIFDTGACISLNPNFVKLVSWYDNEYGYSNRVVDLIGYIATRG</sequence>
<accession>P17331</accession>
<comment type="catalytic activity">
    <reaction evidence="2">
        <text>D-glyceraldehyde 3-phosphate + phosphate + NAD(+) = (2R)-3-phospho-glyceroyl phosphate + NADH + H(+)</text>
        <dbReference type="Rhea" id="RHEA:10300"/>
        <dbReference type="ChEBI" id="CHEBI:15378"/>
        <dbReference type="ChEBI" id="CHEBI:43474"/>
        <dbReference type="ChEBI" id="CHEBI:57540"/>
        <dbReference type="ChEBI" id="CHEBI:57604"/>
        <dbReference type="ChEBI" id="CHEBI:57945"/>
        <dbReference type="ChEBI" id="CHEBI:59776"/>
        <dbReference type="EC" id="1.2.1.12"/>
    </reaction>
</comment>
<comment type="pathway">
    <text>Carbohydrate degradation; glycolysis; pyruvate from D-glyceraldehyde 3-phosphate: step 1/5.</text>
</comment>
<comment type="subunit">
    <text>Homotetramer.</text>
</comment>
<comment type="subcellular location">
    <subcellularLocation>
        <location>Cytoplasm</location>
    </subcellularLocation>
</comment>
<comment type="miscellaneous">
    <text>There are four nearly identical glyceraldehyde 3-phosphate dehydrogenases in Caenorhabditis elegans.</text>
</comment>
<comment type="similarity">
    <text evidence="3">Belongs to the glyceraldehyde-3-phosphate dehydrogenase family.</text>
</comment>
<protein>
    <recommendedName>
        <fullName>Glyceraldehyde-3-phosphate dehydrogenase 4</fullName>
        <shortName>GAPDH-4</shortName>
        <ecNumber>1.2.1.12</ecNumber>
    </recommendedName>
</protein>
<reference key="1">
    <citation type="journal article" date="1989" name="J. Mol. Biol.">
        <title>Genomic organization of the glyceraldehyde-3-phosphate dehydrogenase gene family of Caenorhabditis elegans.</title>
        <authorList>
            <person name="Huang X.Y."/>
            <person name="Barrios L.A.M."/>
            <person name="Vonkhorporn P."/>
            <person name="Honda S."/>
            <person name="Albertson D.G."/>
            <person name="Hecht R.M."/>
        </authorList>
    </citation>
    <scope>NUCLEOTIDE SEQUENCE [GENOMIC DNA]</scope>
    <source>
        <strain>Bristol N2</strain>
    </source>
</reference>
<reference key="2">
    <citation type="journal article" date="1998" name="Science">
        <title>Genome sequence of the nematode C. elegans: a platform for investigating biology.</title>
        <authorList>
            <consortium name="The C. elegans sequencing consortium"/>
        </authorList>
    </citation>
    <scope>NUCLEOTIDE SEQUENCE [LARGE SCALE GENOMIC DNA]</scope>
    <source>
        <strain>Bristol N2</strain>
    </source>
</reference>
<organism>
    <name type="scientific">Caenorhabditis elegans</name>
    <dbReference type="NCBI Taxonomy" id="6239"/>
    <lineage>
        <taxon>Eukaryota</taxon>
        <taxon>Metazoa</taxon>
        <taxon>Ecdysozoa</taxon>
        <taxon>Nematoda</taxon>
        <taxon>Chromadorea</taxon>
        <taxon>Rhabditida</taxon>
        <taxon>Rhabditina</taxon>
        <taxon>Rhabditomorpha</taxon>
        <taxon>Rhabditoidea</taxon>
        <taxon>Rhabditidae</taxon>
        <taxon>Peloderinae</taxon>
        <taxon>Caenorhabditis</taxon>
    </lineage>
</organism>